<gene>
    <name type="primary">ulaD</name>
    <name type="synonym">sgaH</name>
    <name type="ordered locus">MPN_493</name>
    <name type="ORF">MP349</name>
</gene>
<protein>
    <recommendedName>
        <fullName>Probable 3-keto-L-gulonate-6-phosphate decarboxylase</fullName>
        <shortName>KGPDC</shortName>
        <ecNumber>4.1.1.85</ecNumber>
    </recommendedName>
    <alternativeName>
        <fullName>3-dehydro-L-gulonate-6-phosphate decarboxylase</fullName>
    </alternativeName>
    <alternativeName>
        <fullName>L-ascorbate utilization protein D</fullName>
    </alternativeName>
</protein>
<feature type="chain" id="PRO_0000212104" description="Probable 3-keto-L-gulonate-6-phosphate decarboxylase">
    <location>
        <begin position="1"/>
        <end position="218"/>
    </location>
</feature>
<feature type="binding site" evidence="1">
    <location>
        <position position="11"/>
    </location>
    <ligand>
        <name>substrate</name>
    </ligand>
</feature>
<feature type="binding site" evidence="1">
    <location>
        <position position="33"/>
    </location>
    <ligand>
        <name>Mg(2+)</name>
        <dbReference type="ChEBI" id="CHEBI:18420"/>
    </ligand>
</feature>
<feature type="binding site" evidence="1">
    <location>
        <position position="62"/>
    </location>
    <ligand>
        <name>Mg(2+)</name>
        <dbReference type="ChEBI" id="CHEBI:18420"/>
    </ligand>
</feature>
<feature type="binding site" evidence="1">
    <location>
        <position position="194"/>
    </location>
    <ligand>
        <name>substrate</name>
    </ligand>
</feature>
<feature type="site" description="Transition state stabilizer" evidence="1">
    <location>
        <position position="64"/>
    </location>
</feature>
<feature type="site" description="Transition state stabilizer" evidence="1">
    <location>
        <position position="67"/>
    </location>
</feature>
<comment type="function">
    <text evidence="1">Catalyzes the decarboxylation of 3-keto-L-gulonate-6-P into L-xylulose-5-P. Is involved in the anaerobic L-ascorbate utilization (By similarity).</text>
</comment>
<comment type="catalytic activity">
    <reaction>
        <text>3-dehydro-L-gulonate 6-phosphate + H(+) = L-xylulose 5-phosphate + CO2</text>
        <dbReference type="Rhea" id="RHEA:14353"/>
        <dbReference type="ChEBI" id="CHEBI:15378"/>
        <dbReference type="ChEBI" id="CHEBI:16526"/>
        <dbReference type="ChEBI" id="CHEBI:57829"/>
        <dbReference type="ChEBI" id="CHEBI:58774"/>
        <dbReference type="EC" id="4.1.1.85"/>
    </reaction>
</comment>
<comment type="cofactor">
    <cofactor evidence="1">
        <name>Mg(2+)</name>
        <dbReference type="ChEBI" id="CHEBI:18420"/>
    </cofactor>
    <text evidence="1">Binds 1 Mg(2+) ion per subunit.</text>
</comment>
<comment type="pathway">
    <text>Cofactor degradation; L-ascorbate degradation; D-xylulose 5-phosphate from L-ascorbate: step 2/4.</text>
</comment>
<comment type="similarity">
    <text evidence="2">Belongs to the HPS/KGPDC family. KGPDC subfamily.</text>
</comment>
<proteinExistence type="inferred from homology"/>
<reference key="1">
    <citation type="journal article" date="1996" name="Nucleic Acids Res.">
        <title>Complete sequence analysis of the genome of the bacterium Mycoplasma pneumoniae.</title>
        <authorList>
            <person name="Himmelreich R."/>
            <person name="Hilbert H."/>
            <person name="Plagens H."/>
            <person name="Pirkl E."/>
            <person name="Li B.-C."/>
            <person name="Herrmann R."/>
        </authorList>
    </citation>
    <scope>NUCLEOTIDE SEQUENCE [LARGE SCALE GENOMIC DNA]</scope>
    <source>
        <strain>ATCC 29342 / M129 / Subtype 1</strain>
    </source>
</reference>
<reference key="2">
    <citation type="journal article" date="1997" name="Microbiology">
        <title>Is the ribulose monophosphate pathway widely distributed in bacteria?</title>
        <authorList>
            <person name="Reizer J."/>
            <person name="Reizer A."/>
            <person name="Saier M.H. Jr."/>
        </authorList>
    </citation>
    <scope>DISCUSSION OF SEQUENCE</scope>
</reference>
<dbReference type="EC" id="4.1.1.85"/>
<dbReference type="EMBL" id="U00089">
    <property type="protein sequence ID" value="AAB95997.1"/>
    <property type="molecule type" value="Genomic_DNA"/>
</dbReference>
<dbReference type="PIR" id="S73675">
    <property type="entry name" value="S73675"/>
</dbReference>
<dbReference type="RefSeq" id="NP_110181.1">
    <property type="nucleotide sequence ID" value="NC_000912.1"/>
</dbReference>
<dbReference type="RefSeq" id="WP_010874849.1">
    <property type="nucleotide sequence ID" value="NC_000912.1"/>
</dbReference>
<dbReference type="SMR" id="P75293"/>
<dbReference type="IntAct" id="P75293">
    <property type="interactions" value="1"/>
</dbReference>
<dbReference type="STRING" id="272634.MPN_493"/>
<dbReference type="EnsemblBacteria" id="AAB95997">
    <property type="protein sequence ID" value="AAB95997"/>
    <property type="gene ID" value="MPN_493"/>
</dbReference>
<dbReference type="KEGG" id="mpn:MPN_493"/>
<dbReference type="PATRIC" id="fig|272634.6.peg.533"/>
<dbReference type="HOGENOM" id="CLU_081825_0_0_14"/>
<dbReference type="OrthoDB" id="43475at2"/>
<dbReference type="BioCyc" id="MPNE272634:G1GJ3-810-MONOMER"/>
<dbReference type="UniPathway" id="UPA00263">
    <property type="reaction ID" value="UER00378"/>
</dbReference>
<dbReference type="Proteomes" id="UP000000808">
    <property type="component" value="Chromosome"/>
</dbReference>
<dbReference type="GO" id="GO:0033982">
    <property type="term" value="F:3-dehydro-L-gulonate-6-phosphate decarboxylase activity"/>
    <property type="evidence" value="ECO:0007669"/>
    <property type="project" value="UniProtKB-EC"/>
</dbReference>
<dbReference type="GO" id="GO:0046872">
    <property type="term" value="F:metal ion binding"/>
    <property type="evidence" value="ECO:0007669"/>
    <property type="project" value="UniProtKB-KW"/>
</dbReference>
<dbReference type="GO" id="GO:0004590">
    <property type="term" value="F:orotidine-5'-phosphate decarboxylase activity"/>
    <property type="evidence" value="ECO:0007669"/>
    <property type="project" value="InterPro"/>
</dbReference>
<dbReference type="GO" id="GO:0006207">
    <property type="term" value="P:'de novo' pyrimidine nucleobase biosynthetic process"/>
    <property type="evidence" value="ECO:0007669"/>
    <property type="project" value="InterPro"/>
</dbReference>
<dbReference type="GO" id="GO:0019854">
    <property type="term" value="P:L-ascorbic acid catabolic process"/>
    <property type="evidence" value="ECO:0007669"/>
    <property type="project" value="UniProtKB-UniPathway"/>
</dbReference>
<dbReference type="CDD" id="cd04726">
    <property type="entry name" value="KGPDC_HPS"/>
    <property type="match status" value="1"/>
</dbReference>
<dbReference type="FunFam" id="3.20.20.70:FF:000022">
    <property type="entry name" value="3-keto-L-gulonate-6-phosphate decarboxylase UlaD"/>
    <property type="match status" value="1"/>
</dbReference>
<dbReference type="Gene3D" id="3.20.20.70">
    <property type="entry name" value="Aldolase class I"/>
    <property type="match status" value="1"/>
</dbReference>
<dbReference type="InterPro" id="IPR013785">
    <property type="entry name" value="Aldolase_TIM"/>
</dbReference>
<dbReference type="InterPro" id="IPR041710">
    <property type="entry name" value="HPS/KGPDC"/>
</dbReference>
<dbReference type="InterPro" id="IPR001754">
    <property type="entry name" value="OMPdeCOase_dom"/>
</dbReference>
<dbReference type="InterPro" id="IPR011060">
    <property type="entry name" value="RibuloseP-bd_barrel"/>
</dbReference>
<dbReference type="NCBIfam" id="NF009832">
    <property type="entry name" value="PRK13306.1"/>
    <property type="match status" value="1"/>
</dbReference>
<dbReference type="PANTHER" id="PTHR35039">
    <property type="entry name" value="3-KETO-L-GULONATE-6-PHOSPHATE DECARBOXYLASE SGBH-RELATED"/>
    <property type="match status" value="1"/>
</dbReference>
<dbReference type="PANTHER" id="PTHR35039:SF3">
    <property type="entry name" value="3-KETO-L-GULONATE-6-PHOSPHATE DECARBOXYLASE SGBH-RELATED"/>
    <property type="match status" value="1"/>
</dbReference>
<dbReference type="Pfam" id="PF00215">
    <property type="entry name" value="OMPdecase"/>
    <property type="match status" value="1"/>
</dbReference>
<dbReference type="SMART" id="SM00934">
    <property type="entry name" value="OMPdecase"/>
    <property type="match status" value="1"/>
</dbReference>
<dbReference type="SUPFAM" id="SSF51366">
    <property type="entry name" value="Ribulose-phoshate binding barrel"/>
    <property type="match status" value="1"/>
</dbReference>
<sequence>MALPLIQIALDNLSLASALNDLAKVGDAVDVIEVGTILLTAEGVNAVKEIAKRYPHKLIVADGKIADTGKVFNQMFFDAGAHFTTVICAAELPTVKDVVTVGNSYTPIKETQVEMTSNFTWEQVTQWKQVGVQQVVWHRSRDAQAAGVNWSDKDLQAVKRLADLGFKVTVTGGITLNDIQLFKDIPIYIFIAGRTIRDASDPLQTVQQFKDEFHKYWK</sequence>
<accession>P75293</accession>
<evidence type="ECO:0000250" key="1"/>
<evidence type="ECO:0000305" key="2"/>
<keyword id="KW-0119">Carbohydrate metabolism</keyword>
<keyword id="KW-0210">Decarboxylase</keyword>
<keyword id="KW-0456">Lyase</keyword>
<keyword id="KW-0460">Magnesium</keyword>
<keyword id="KW-0479">Metal-binding</keyword>
<keyword id="KW-1185">Reference proteome</keyword>
<organism>
    <name type="scientific">Mycoplasma pneumoniae (strain ATCC 29342 / M129 / Subtype 1)</name>
    <name type="common">Mycoplasmoides pneumoniae</name>
    <dbReference type="NCBI Taxonomy" id="272634"/>
    <lineage>
        <taxon>Bacteria</taxon>
        <taxon>Bacillati</taxon>
        <taxon>Mycoplasmatota</taxon>
        <taxon>Mycoplasmoidales</taxon>
        <taxon>Mycoplasmoidaceae</taxon>
        <taxon>Mycoplasmoides</taxon>
    </lineage>
</organism>
<name>ULAD_MYCPN</name>